<accession>B2A4E1</accession>
<evidence type="ECO:0000255" key="1">
    <source>
        <dbReference type="HAMAP-Rule" id="MF_01369"/>
    </source>
</evidence>
<evidence type="ECO:0000305" key="2"/>
<proteinExistence type="inferred from homology"/>
<comment type="function">
    <text evidence="1">One of the early assembly proteins it binds 23S rRNA. One of the proteins that surrounds the polypeptide exit tunnel on the outside of the ribosome. Forms the main docking site for trigger factor binding to the ribosome.</text>
</comment>
<comment type="subunit">
    <text evidence="1">Part of the 50S ribosomal subunit. Contacts protein L29, and trigger factor when it is bound to the ribosome.</text>
</comment>
<comment type="similarity">
    <text evidence="1">Belongs to the universal ribosomal protein uL23 family.</text>
</comment>
<protein>
    <recommendedName>
        <fullName evidence="1">Large ribosomal subunit protein uL23</fullName>
    </recommendedName>
    <alternativeName>
        <fullName evidence="2">50S ribosomal protein L23</fullName>
    </alternativeName>
</protein>
<keyword id="KW-1185">Reference proteome</keyword>
<keyword id="KW-0687">Ribonucleoprotein</keyword>
<keyword id="KW-0689">Ribosomal protein</keyword>
<keyword id="KW-0694">RNA-binding</keyword>
<keyword id="KW-0699">rRNA-binding</keyword>
<feature type="chain" id="PRO_1000184097" description="Large ribosomal subunit protein uL23">
    <location>
        <begin position="1"/>
        <end position="93"/>
    </location>
</feature>
<gene>
    <name evidence="1" type="primary">rplW</name>
    <name type="ordered locus">Nther_0196</name>
</gene>
<sequence length="93" mass="10674">MDPRDVIIKPWITEQSTDQMEENKYTFVVAKDANKTQIKDAVQKLFGVKVKQVNTMNMKGKPKRLGIYQGKTPSWKKAIITLTDDSKAIDLFE</sequence>
<reference key="1">
    <citation type="submission" date="2008-04" db="EMBL/GenBank/DDBJ databases">
        <title>Complete sequence of chromosome of Natranaerobius thermophilus JW/NM-WN-LF.</title>
        <authorList>
            <consortium name="US DOE Joint Genome Institute"/>
            <person name="Copeland A."/>
            <person name="Lucas S."/>
            <person name="Lapidus A."/>
            <person name="Glavina del Rio T."/>
            <person name="Dalin E."/>
            <person name="Tice H."/>
            <person name="Bruce D."/>
            <person name="Goodwin L."/>
            <person name="Pitluck S."/>
            <person name="Chertkov O."/>
            <person name="Brettin T."/>
            <person name="Detter J.C."/>
            <person name="Han C."/>
            <person name="Kuske C.R."/>
            <person name="Schmutz J."/>
            <person name="Larimer F."/>
            <person name="Land M."/>
            <person name="Hauser L."/>
            <person name="Kyrpides N."/>
            <person name="Lykidis A."/>
            <person name="Mesbah N.M."/>
            <person name="Wiegel J."/>
        </authorList>
    </citation>
    <scope>NUCLEOTIDE SEQUENCE [LARGE SCALE GENOMIC DNA]</scope>
    <source>
        <strain>ATCC BAA-1301 / DSM 18059 / JW/NM-WN-LF</strain>
    </source>
</reference>
<organism>
    <name type="scientific">Natranaerobius thermophilus (strain ATCC BAA-1301 / DSM 18059 / JW/NM-WN-LF)</name>
    <dbReference type="NCBI Taxonomy" id="457570"/>
    <lineage>
        <taxon>Bacteria</taxon>
        <taxon>Bacillati</taxon>
        <taxon>Bacillota</taxon>
        <taxon>Clostridia</taxon>
        <taxon>Natranaerobiales</taxon>
        <taxon>Natranaerobiaceae</taxon>
        <taxon>Natranaerobius</taxon>
    </lineage>
</organism>
<name>RL23_NATTJ</name>
<dbReference type="EMBL" id="CP001034">
    <property type="protein sequence ID" value="ACB83795.1"/>
    <property type="molecule type" value="Genomic_DNA"/>
</dbReference>
<dbReference type="RefSeq" id="WP_012446684.1">
    <property type="nucleotide sequence ID" value="NC_010718.1"/>
</dbReference>
<dbReference type="SMR" id="B2A4E1"/>
<dbReference type="FunCoup" id="B2A4E1">
    <property type="interactions" value="347"/>
</dbReference>
<dbReference type="STRING" id="457570.Nther_0196"/>
<dbReference type="KEGG" id="nth:Nther_0196"/>
<dbReference type="eggNOG" id="COG0089">
    <property type="taxonomic scope" value="Bacteria"/>
</dbReference>
<dbReference type="HOGENOM" id="CLU_037562_3_2_9"/>
<dbReference type="InParanoid" id="B2A4E1"/>
<dbReference type="OrthoDB" id="9793353at2"/>
<dbReference type="Proteomes" id="UP000001683">
    <property type="component" value="Chromosome"/>
</dbReference>
<dbReference type="GO" id="GO:1990904">
    <property type="term" value="C:ribonucleoprotein complex"/>
    <property type="evidence" value="ECO:0007669"/>
    <property type="project" value="UniProtKB-KW"/>
</dbReference>
<dbReference type="GO" id="GO:0005840">
    <property type="term" value="C:ribosome"/>
    <property type="evidence" value="ECO:0007669"/>
    <property type="project" value="UniProtKB-KW"/>
</dbReference>
<dbReference type="GO" id="GO:0019843">
    <property type="term" value="F:rRNA binding"/>
    <property type="evidence" value="ECO:0007669"/>
    <property type="project" value="UniProtKB-UniRule"/>
</dbReference>
<dbReference type="GO" id="GO:0003735">
    <property type="term" value="F:structural constituent of ribosome"/>
    <property type="evidence" value="ECO:0007669"/>
    <property type="project" value="InterPro"/>
</dbReference>
<dbReference type="GO" id="GO:0006412">
    <property type="term" value="P:translation"/>
    <property type="evidence" value="ECO:0007669"/>
    <property type="project" value="UniProtKB-UniRule"/>
</dbReference>
<dbReference type="FunFam" id="3.30.70.330:FF:000001">
    <property type="entry name" value="50S ribosomal protein L23"/>
    <property type="match status" value="1"/>
</dbReference>
<dbReference type="Gene3D" id="3.30.70.330">
    <property type="match status" value="1"/>
</dbReference>
<dbReference type="HAMAP" id="MF_01369_B">
    <property type="entry name" value="Ribosomal_uL23_B"/>
    <property type="match status" value="1"/>
</dbReference>
<dbReference type="InterPro" id="IPR012677">
    <property type="entry name" value="Nucleotide-bd_a/b_plait_sf"/>
</dbReference>
<dbReference type="InterPro" id="IPR013025">
    <property type="entry name" value="Ribosomal_uL23-like"/>
</dbReference>
<dbReference type="InterPro" id="IPR012678">
    <property type="entry name" value="Ribosomal_uL23/eL15/eS24_sf"/>
</dbReference>
<dbReference type="InterPro" id="IPR001014">
    <property type="entry name" value="Ribosomal_uL23_CS"/>
</dbReference>
<dbReference type="NCBIfam" id="NF004363">
    <property type="entry name" value="PRK05738.2-4"/>
    <property type="match status" value="1"/>
</dbReference>
<dbReference type="PANTHER" id="PTHR11620">
    <property type="entry name" value="60S RIBOSOMAL PROTEIN L23A"/>
    <property type="match status" value="1"/>
</dbReference>
<dbReference type="Pfam" id="PF00276">
    <property type="entry name" value="Ribosomal_L23"/>
    <property type="match status" value="1"/>
</dbReference>
<dbReference type="SUPFAM" id="SSF54189">
    <property type="entry name" value="Ribosomal proteins S24e, L23 and L15e"/>
    <property type="match status" value="1"/>
</dbReference>
<dbReference type="PROSITE" id="PS00050">
    <property type="entry name" value="RIBOSOMAL_L23"/>
    <property type="match status" value="1"/>
</dbReference>